<sequence length="238" mass="25100">MAREQLNGASYNWNAFPDRPQLAVALAGRVADRLTRAIAERGTAVLAVSGGTTPTKFFAALSAMPIAWDKVIVTLVDERFVPASSPRSNAGLVAANLLQNAAKAARFVPLYHEASGIEDAAASDDAALRSLPWPLDVVVLGMGPDGHTASFFPDADDLAELLDPASDRIILPVHAASAGEPRLTLTLARIIDAGFIALHIEGEDKRTAFDGAVAPGPRKPIRAVLDAAPRPVEVFWAP</sequence>
<name>6PGL_RHILO</name>
<proteinExistence type="inferred from homology"/>
<reference key="1">
    <citation type="journal article" date="2000" name="DNA Res.">
        <title>Complete genome structure of the nitrogen-fixing symbiotic bacterium Mesorhizobium loti.</title>
        <authorList>
            <person name="Kaneko T."/>
            <person name="Nakamura Y."/>
            <person name="Sato S."/>
            <person name="Asamizu E."/>
            <person name="Kato T."/>
            <person name="Sasamoto S."/>
            <person name="Watanabe A."/>
            <person name="Idesawa K."/>
            <person name="Ishikawa A."/>
            <person name="Kawashima K."/>
            <person name="Kimura T."/>
            <person name="Kishida Y."/>
            <person name="Kiyokawa C."/>
            <person name="Kohara M."/>
            <person name="Matsumoto M."/>
            <person name="Matsuno A."/>
            <person name="Mochizuki Y."/>
            <person name="Nakayama S."/>
            <person name="Nakazaki N."/>
            <person name="Shimpo S."/>
            <person name="Sugimoto M."/>
            <person name="Takeuchi C."/>
            <person name="Yamada M."/>
            <person name="Tabata S."/>
        </authorList>
    </citation>
    <scope>NUCLEOTIDE SEQUENCE [LARGE SCALE GENOMIC DNA]</scope>
    <source>
        <strain>LMG 29417 / CECT 9101 / MAFF 303099</strain>
    </source>
</reference>
<accession>Q989A3</accession>
<dbReference type="EC" id="3.1.1.31"/>
<dbReference type="EMBL" id="BA000012">
    <property type="protein sequence ID" value="BAB52794.1"/>
    <property type="molecule type" value="Genomic_DNA"/>
</dbReference>
<dbReference type="RefSeq" id="WP_010914108.1">
    <property type="nucleotide sequence ID" value="NC_002678.2"/>
</dbReference>
<dbReference type="SMR" id="Q989A3"/>
<dbReference type="KEGG" id="mlo:mll6514"/>
<dbReference type="eggNOG" id="COG0363">
    <property type="taxonomic scope" value="Bacteria"/>
</dbReference>
<dbReference type="HOGENOM" id="CLU_053947_2_1_5"/>
<dbReference type="UniPathway" id="UPA00115">
    <property type="reaction ID" value="UER00409"/>
</dbReference>
<dbReference type="Proteomes" id="UP000000552">
    <property type="component" value="Chromosome"/>
</dbReference>
<dbReference type="GO" id="GO:0017057">
    <property type="term" value="F:6-phosphogluconolactonase activity"/>
    <property type="evidence" value="ECO:0007669"/>
    <property type="project" value="UniProtKB-EC"/>
</dbReference>
<dbReference type="GO" id="GO:0005975">
    <property type="term" value="P:carbohydrate metabolic process"/>
    <property type="evidence" value="ECO:0007669"/>
    <property type="project" value="InterPro"/>
</dbReference>
<dbReference type="GO" id="GO:0006098">
    <property type="term" value="P:pentose-phosphate shunt"/>
    <property type="evidence" value="ECO:0007669"/>
    <property type="project" value="UniProtKB-UniPathway"/>
</dbReference>
<dbReference type="CDD" id="cd01400">
    <property type="entry name" value="6PGL"/>
    <property type="match status" value="1"/>
</dbReference>
<dbReference type="Gene3D" id="3.40.50.1360">
    <property type="match status" value="1"/>
</dbReference>
<dbReference type="InterPro" id="IPR005900">
    <property type="entry name" value="6-phosphogluconolactonase_DevB"/>
</dbReference>
<dbReference type="InterPro" id="IPR006148">
    <property type="entry name" value="Glc/Gal-6P_isomerase"/>
</dbReference>
<dbReference type="InterPro" id="IPR037171">
    <property type="entry name" value="NagB/RpiA_transferase-like"/>
</dbReference>
<dbReference type="InterPro" id="IPR039104">
    <property type="entry name" value="PGLS"/>
</dbReference>
<dbReference type="NCBIfam" id="TIGR01198">
    <property type="entry name" value="pgl"/>
    <property type="match status" value="1"/>
</dbReference>
<dbReference type="PANTHER" id="PTHR11054">
    <property type="entry name" value="6-PHOSPHOGLUCONOLACTONASE"/>
    <property type="match status" value="1"/>
</dbReference>
<dbReference type="PANTHER" id="PTHR11054:SF0">
    <property type="entry name" value="6-PHOSPHOGLUCONOLACTONASE"/>
    <property type="match status" value="1"/>
</dbReference>
<dbReference type="Pfam" id="PF01182">
    <property type="entry name" value="Glucosamine_iso"/>
    <property type="match status" value="1"/>
</dbReference>
<dbReference type="SUPFAM" id="SSF100950">
    <property type="entry name" value="NagB/RpiA/CoA transferase-like"/>
    <property type="match status" value="1"/>
</dbReference>
<organism>
    <name type="scientific">Mesorhizobium japonicum (strain LMG 29417 / CECT 9101 / MAFF 303099)</name>
    <name type="common">Mesorhizobium loti (strain MAFF 303099)</name>
    <dbReference type="NCBI Taxonomy" id="266835"/>
    <lineage>
        <taxon>Bacteria</taxon>
        <taxon>Pseudomonadati</taxon>
        <taxon>Pseudomonadota</taxon>
        <taxon>Alphaproteobacteria</taxon>
        <taxon>Hyphomicrobiales</taxon>
        <taxon>Phyllobacteriaceae</taxon>
        <taxon>Mesorhizobium</taxon>
    </lineage>
</organism>
<comment type="function">
    <text>Hydrolysis of 6-phosphogluconolactone to 6-phosphogluconate.</text>
</comment>
<comment type="catalytic activity">
    <reaction>
        <text>6-phospho-D-glucono-1,5-lactone + H2O = 6-phospho-D-gluconate + H(+)</text>
        <dbReference type="Rhea" id="RHEA:12556"/>
        <dbReference type="ChEBI" id="CHEBI:15377"/>
        <dbReference type="ChEBI" id="CHEBI:15378"/>
        <dbReference type="ChEBI" id="CHEBI:57955"/>
        <dbReference type="ChEBI" id="CHEBI:58759"/>
        <dbReference type="EC" id="3.1.1.31"/>
    </reaction>
</comment>
<comment type="pathway">
    <text>Carbohydrate degradation; pentose phosphate pathway; D-ribulose 5-phosphate from D-glucose 6-phosphate (oxidative stage): step 2/3.</text>
</comment>
<comment type="similarity">
    <text evidence="1">Belongs to the glucosamine/galactosamine-6-phosphate isomerase family. 6-phosphogluconolactonase subfamily.</text>
</comment>
<feature type="chain" id="PRO_0000090104" description="6-phosphogluconolactonase">
    <location>
        <begin position="1"/>
        <end position="238"/>
    </location>
</feature>
<gene>
    <name type="primary">pgl</name>
    <name type="ordered locus">mll6514</name>
</gene>
<keyword id="KW-0378">Hydrolase</keyword>
<evidence type="ECO:0000305" key="1"/>
<protein>
    <recommendedName>
        <fullName>6-phosphogluconolactonase</fullName>
        <shortName>6PGL</shortName>
        <ecNumber>3.1.1.31</ecNumber>
    </recommendedName>
</protein>